<proteinExistence type="inferred from homology"/>
<gene>
    <name type="primary">fam32a</name>
</gene>
<accession>B0JZ89</accession>
<name>FA32A_XENTR</name>
<protein>
    <recommendedName>
        <fullName>Protein FAM32A</fullName>
    </recommendedName>
</protein>
<feature type="chain" id="PRO_0000417672" description="Protein FAM32A">
    <location>
        <begin position="1"/>
        <end position="112"/>
    </location>
</feature>
<feature type="region of interest" description="Disordered" evidence="2">
    <location>
        <begin position="15"/>
        <end position="35"/>
    </location>
</feature>
<organism>
    <name type="scientific">Xenopus tropicalis</name>
    <name type="common">Western clawed frog</name>
    <name type="synonym">Silurana tropicalis</name>
    <dbReference type="NCBI Taxonomy" id="8364"/>
    <lineage>
        <taxon>Eukaryota</taxon>
        <taxon>Metazoa</taxon>
        <taxon>Chordata</taxon>
        <taxon>Craniata</taxon>
        <taxon>Vertebrata</taxon>
        <taxon>Euteleostomi</taxon>
        <taxon>Amphibia</taxon>
        <taxon>Batrachia</taxon>
        <taxon>Anura</taxon>
        <taxon>Pipoidea</taxon>
        <taxon>Pipidae</taxon>
        <taxon>Xenopodinae</taxon>
        <taxon>Xenopus</taxon>
        <taxon>Silurana</taxon>
    </lineage>
</organism>
<evidence type="ECO:0000250" key="1"/>
<evidence type="ECO:0000256" key="2">
    <source>
        <dbReference type="SAM" id="MobiDB-lite"/>
    </source>
</evidence>
<evidence type="ECO:0000305" key="3"/>
<sequence length="112" mass="13162">MTEYESAQKGALKLKGCGDMSLGKKKKKKNKANDQIMQEIITSKKNEEEKKKPSLDKRTPAQLAFEKMQEKRQMERILKKASKTHKQRVEDFNRHLDTLTEHYDIPKVSWTK</sequence>
<comment type="function">
    <text evidence="1">May induce G2 arrest and apoptosis. May also increase cell sensitivity to apoptotic stimuli.</text>
</comment>
<comment type="subcellular location">
    <subcellularLocation>
        <location evidence="1">Nucleus</location>
    </subcellularLocation>
</comment>
<comment type="similarity">
    <text evidence="3">Belongs to the FAM32 family.</text>
</comment>
<keyword id="KW-0053">Apoptosis</keyword>
<keyword id="KW-0131">Cell cycle</keyword>
<keyword id="KW-0539">Nucleus</keyword>
<keyword id="KW-1185">Reference proteome</keyword>
<reference key="1">
    <citation type="journal article" date="2010" name="Science">
        <title>The genome of the Western clawed frog Xenopus tropicalis.</title>
        <authorList>
            <person name="Hellsten U."/>
            <person name="Harland R.M."/>
            <person name="Gilchrist M.J."/>
            <person name="Hendrix D."/>
            <person name="Jurka J."/>
            <person name="Kapitonov V."/>
            <person name="Ovcharenko I."/>
            <person name="Putnam N.H."/>
            <person name="Shu S."/>
            <person name="Taher L."/>
            <person name="Blitz I.L."/>
            <person name="Blumberg B."/>
            <person name="Dichmann D.S."/>
            <person name="Dubchak I."/>
            <person name="Amaya E."/>
            <person name="Detter J.C."/>
            <person name="Fletcher R."/>
            <person name="Gerhard D.S."/>
            <person name="Goodstein D."/>
            <person name="Graves T."/>
            <person name="Grigoriev I.V."/>
            <person name="Grimwood J."/>
            <person name="Kawashima T."/>
            <person name="Lindquist E."/>
            <person name="Lucas S.M."/>
            <person name="Mead P.E."/>
            <person name="Mitros T."/>
            <person name="Ogino H."/>
            <person name="Ohta Y."/>
            <person name="Poliakov A.V."/>
            <person name="Pollet N."/>
            <person name="Robert J."/>
            <person name="Salamov A."/>
            <person name="Sater A.K."/>
            <person name="Schmutz J."/>
            <person name="Terry A."/>
            <person name="Vize P.D."/>
            <person name="Warren W.C."/>
            <person name="Wells D."/>
            <person name="Wills A."/>
            <person name="Wilson R.K."/>
            <person name="Zimmerman L.B."/>
            <person name="Zorn A.M."/>
            <person name="Grainger R."/>
            <person name="Grammer T."/>
            <person name="Khokha M.K."/>
            <person name="Richardson P.M."/>
            <person name="Rokhsar D.S."/>
        </authorList>
    </citation>
    <scope>NUCLEOTIDE SEQUENCE [LARGE SCALE GENOMIC DNA]</scope>
</reference>
<reference key="2">
    <citation type="submission" date="2008-02" db="EMBL/GenBank/DDBJ databases">
        <authorList>
            <consortium name="NIH - Xenopus Gene Collection (XGC) project"/>
        </authorList>
    </citation>
    <scope>NUCLEOTIDE SEQUENCE [LARGE SCALE MRNA]</scope>
    <source>
        <tissue>Embryo</tissue>
    </source>
</reference>
<dbReference type="EMBL" id="AAMC01037329">
    <property type="status" value="NOT_ANNOTATED_CDS"/>
    <property type="molecule type" value="Genomic_DNA"/>
</dbReference>
<dbReference type="EMBL" id="AAMC01037330">
    <property type="status" value="NOT_ANNOTATED_CDS"/>
    <property type="molecule type" value="Genomic_DNA"/>
</dbReference>
<dbReference type="EMBL" id="AAMC01037331">
    <property type="status" value="NOT_ANNOTATED_CDS"/>
    <property type="molecule type" value="Genomic_DNA"/>
</dbReference>
<dbReference type="EMBL" id="BC159080">
    <property type="protein sequence ID" value="AAI59081.1"/>
    <property type="molecule type" value="mRNA"/>
</dbReference>
<dbReference type="RefSeq" id="NP_001120136.1">
    <property type="nucleotide sequence ID" value="NM_001126664.1"/>
</dbReference>
<dbReference type="SMR" id="B0JZ89"/>
<dbReference type="FunCoup" id="B0JZ89">
    <property type="interactions" value="1579"/>
</dbReference>
<dbReference type="STRING" id="8364.ENSXETP00000006341"/>
<dbReference type="PaxDb" id="8364-ENSXETP00000063612"/>
<dbReference type="GeneID" id="100145169"/>
<dbReference type="KEGG" id="xtr:100145169"/>
<dbReference type="AGR" id="Xenbase:XB-GENE-966073"/>
<dbReference type="CTD" id="26017"/>
<dbReference type="Xenbase" id="XB-GENE-966073">
    <property type="gene designation" value="fam32a"/>
</dbReference>
<dbReference type="eggNOG" id="KOG3410">
    <property type="taxonomic scope" value="Eukaryota"/>
</dbReference>
<dbReference type="HOGENOM" id="CLU_098435_3_0_1"/>
<dbReference type="InParanoid" id="B0JZ89"/>
<dbReference type="OMA" id="QLSEHHD"/>
<dbReference type="OrthoDB" id="205403at2759"/>
<dbReference type="PhylomeDB" id="B0JZ89"/>
<dbReference type="TreeFam" id="TF314020"/>
<dbReference type="Proteomes" id="UP000008143">
    <property type="component" value="Chromosome 1"/>
</dbReference>
<dbReference type="Bgee" id="ENSXETG00000031043">
    <property type="expression patterns" value="Expressed in testis and 13 other cell types or tissues"/>
</dbReference>
<dbReference type="GO" id="GO:0005634">
    <property type="term" value="C:nucleus"/>
    <property type="evidence" value="ECO:0007669"/>
    <property type="project" value="UniProtKB-SubCell"/>
</dbReference>
<dbReference type="GO" id="GO:0006915">
    <property type="term" value="P:apoptotic process"/>
    <property type="evidence" value="ECO:0007669"/>
    <property type="project" value="UniProtKB-KW"/>
</dbReference>
<dbReference type="InterPro" id="IPR013865">
    <property type="entry name" value="FAM32A"/>
</dbReference>
<dbReference type="PANTHER" id="PTHR13282">
    <property type="entry name" value="PROTEIN FAM32A"/>
    <property type="match status" value="1"/>
</dbReference>
<dbReference type="PANTHER" id="PTHR13282:SF6">
    <property type="entry name" value="PROTEIN FAM32A"/>
    <property type="match status" value="1"/>
</dbReference>
<dbReference type="Pfam" id="PF08555">
    <property type="entry name" value="FAM32A"/>
    <property type="match status" value="1"/>
</dbReference>